<feature type="chain" id="PRO_0000385997" description="GTPase Obg">
    <location>
        <begin position="1"/>
        <end position="434"/>
    </location>
</feature>
<feature type="domain" description="Obg" evidence="3">
    <location>
        <begin position="2"/>
        <end position="160"/>
    </location>
</feature>
<feature type="domain" description="OBG-type G" evidence="1">
    <location>
        <begin position="161"/>
        <end position="334"/>
    </location>
</feature>
<feature type="domain" description="OCT" evidence="2">
    <location>
        <begin position="356"/>
        <end position="434"/>
    </location>
</feature>
<feature type="binding site" evidence="1">
    <location>
        <begin position="167"/>
        <end position="174"/>
    </location>
    <ligand>
        <name>GTP</name>
        <dbReference type="ChEBI" id="CHEBI:37565"/>
    </ligand>
</feature>
<feature type="binding site" evidence="1">
    <location>
        <position position="174"/>
    </location>
    <ligand>
        <name>Mg(2+)</name>
        <dbReference type="ChEBI" id="CHEBI:18420"/>
    </ligand>
</feature>
<feature type="binding site" evidence="1">
    <location>
        <begin position="192"/>
        <end position="196"/>
    </location>
    <ligand>
        <name>GTP</name>
        <dbReference type="ChEBI" id="CHEBI:37565"/>
    </ligand>
</feature>
<feature type="binding site" evidence="1">
    <location>
        <position position="194"/>
    </location>
    <ligand>
        <name>Mg(2+)</name>
        <dbReference type="ChEBI" id="CHEBI:18420"/>
    </ligand>
</feature>
<feature type="binding site" evidence="1">
    <location>
        <begin position="214"/>
        <end position="217"/>
    </location>
    <ligand>
        <name>GTP</name>
        <dbReference type="ChEBI" id="CHEBI:37565"/>
    </ligand>
</feature>
<feature type="binding site" evidence="1">
    <location>
        <begin position="284"/>
        <end position="287"/>
    </location>
    <ligand>
        <name>GTP</name>
        <dbReference type="ChEBI" id="CHEBI:37565"/>
    </ligand>
</feature>
<feature type="binding site" evidence="1">
    <location>
        <begin position="315"/>
        <end position="317"/>
    </location>
    <ligand>
        <name>GTP</name>
        <dbReference type="ChEBI" id="CHEBI:37565"/>
    </ligand>
</feature>
<keyword id="KW-0963">Cytoplasm</keyword>
<keyword id="KW-0342">GTP-binding</keyword>
<keyword id="KW-0378">Hydrolase</keyword>
<keyword id="KW-0460">Magnesium</keyword>
<keyword id="KW-0479">Metal-binding</keyword>
<keyword id="KW-0547">Nucleotide-binding</keyword>
<name>OBG_LACH4</name>
<organism>
    <name type="scientific">Lactobacillus helveticus (strain DPC 4571)</name>
    <dbReference type="NCBI Taxonomy" id="405566"/>
    <lineage>
        <taxon>Bacteria</taxon>
        <taxon>Bacillati</taxon>
        <taxon>Bacillota</taxon>
        <taxon>Bacilli</taxon>
        <taxon>Lactobacillales</taxon>
        <taxon>Lactobacillaceae</taxon>
        <taxon>Lactobacillus</taxon>
    </lineage>
</organism>
<dbReference type="EC" id="3.6.5.-" evidence="1"/>
<dbReference type="EMBL" id="CP000517">
    <property type="protein sequence ID" value="ABX27102.1"/>
    <property type="molecule type" value="Genomic_DNA"/>
</dbReference>
<dbReference type="SMR" id="A8YV14"/>
<dbReference type="KEGG" id="lhe:lhv_1041"/>
<dbReference type="eggNOG" id="COG0536">
    <property type="taxonomic scope" value="Bacteria"/>
</dbReference>
<dbReference type="HOGENOM" id="CLU_011747_2_1_9"/>
<dbReference type="Proteomes" id="UP000000790">
    <property type="component" value="Chromosome"/>
</dbReference>
<dbReference type="GO" id="GO:0005737">
    <property type="term" value="C:cytoplasm"/>
    <property type="evidence" value="ECO:0007669"/>
    <property type="project" value="UniProtKB-SubCell"/>
</dbReference>
<dbReference type="GO" id="GO:0005525">
    <property type="term" value="F:GTP binding"/>
    <property type="evidence" value="ECO:0007669"/>
    <property type="project" value="UniProtKB-UniRule"/>
</dbReference>
<dbReference type="GO" id="GO:0003924">
    <property type="term" value="F:GTPase activity"/>
    <property type="evidence" value="ECO:0007669"/>
    <property type="project" value="UniProtKB-UniRule"/>
</dbReference>
<dbReference type="GO" id="GO:0000287">
    <property type="term" value="F:magnesium ion binding"/>
    <property type="evidence" value="ECO:0007669"/>
    <property type="project" value="InterPro"/>
</dbReference>
<dbReference type="GO" id="GO:0042254">
    <property type="term" value="P:ribosome biogenesis"/>
    <property type="evidence" value="ECO:0007669"/>
    <property type="project" value="UniProtKB-UniRule"/>
</dbReference>
<dbReference type="CDD" id="cd01898">
    <property type="entry name" value="Obg"/>
    <property type="match status" value="1"/>
</dbReference>
<dbReference type="FunFam" id="2.70.210.12:FF:000001">
    <property type="entry name" value="GTPase Obg"/>
    <property type="match status" value="1"/>
</dbReference>
<dbReference type="Gene3D" id="3.30.300.350">
    <property type="entry name" value="GTP-binding protein OBG, C-terminal domain"/>
    <property type="match status" value="1"/>
</dbReference>
<dbReference type="Gene3D" id="2.70.210.12">
    <property type="entry name" value="GTP1/OBG domain"/>
    <property type="match status" value="1"/>
</dbReference>
<dbReference type="Gene3D" id="3.40.50.300">
    <property type="entry name" value="P-loop containing nucleotide triphosphate hydrolases"/>
    <property type="match status" value="1"/>
</dbReference>
<dbReference type="HAMAP" id="MF_01454">
    <property type="entry name" value="GTPase_Obg"/>
    <property type="match status" value="1"/>
</dbReference>
<dbReference type="InterPro" id="IPR031167">
    <property type="entry name" value="G_OBG"/>
</dbReference>
<dbReference type="InterPro" id="IPR006073">
    <property type="entry name" value="GTP-bd"/>
</dbReference>
<dbReference type="InterPro" id="IPR014100">
    <property type="entry name" value="GTP-bd_Obg/CgtA"/>
</dbReference>
<dbReference type="InterPro" id="IPR036346">
    <property type="entry name" value="GTP-bd_prot_GTP1/OBG_C_sf"/>
</dbReference>
<dbReference type="InterPro" id="IPR006074">
    <property type="entry name" value="GTP1-OBG_CS"/>
</dbReference>
<dbReference type="InterPro" id="IPR006169">
    <property type="entry name" value="GTP1_OBG_dom"/>
</dbReference>
<dbReference type="InterPro" id="IPR036726">
    <property type="entry name" value="GTP1_OBG_dom_sf"/>
</dbReference>
<dbReference type="InterPro" id="IPR045086">
    <property type="entry name" value="OBG_GTPase"/>
</dbReference>
<dbReference type="InterPro" id="IPR015349">
    <property type="entry name" value="OCT_dom"/>
</dbReference>
<dbReference type="InterPro" id="IPR027417">
    <property type="entry name" value="P-loop_NTPase"/>
</dbReference>
<dbReference type="NCBIfam" id="TIGR02729">
    <property type="entry name" value="Obg_CgtA"/>
    <property type="match status" value="1"/>
</dbReference>
<dbReference type="NCBIfam" id="TIGR03595">
    <property type="entry name" value="Obg_CgtA_exten"/>
    <property type="match status" value="1"/>
</dbReference>
<dbReference type="NCBIfam" id="NF008954">
    <property type="entry name" value="PRK12296.1"/>
    <property type="match status" value="1"/>
</dbReference>
<dbReference type="NCBIfam" id="NF008955">
    <property type="entry name" value="PRK12297.1"/>
    <property type="match status" value="1"/>
</dbReference>
<dbReference type="NCBIfam" id="NF008956">
    <property type="entry name" value="PRK12299.1"/>
    <property type="match status" value="1"/>
</dbReference>
<dbReference type="PANTHER" id="PTHR11702">
    <property type="entry name" value="DEVELOPMENTALLY REGULATED GTP-BINDING PROTEIN-RELATED"/>
    <property type="match status" value="1"/>
</dbReference>
<dbReference type="PANTHER" id="PTHR11702:SF31">
    <property type="entry name" value="MITOCHONDRIAL RIBOSOME-ASSOCIATED GTPASE 2"/>
    <property type="match status" value="1"/>
</dbReference>
<dbReference type="Pfam" id="PF09269">
    <property type="entry name" value="DUF1967"/>
    <property type="match status" value="1"/>
</dbReference>
<dbReference type="Pfam" id="PF01018">
    <property type="entry name" value="GTP1_OBG"/>
    <property type="match status" value="1"/>
</dbReference>
<dbReference type="Pfam" id="PF01926">
    <property type="entry name" value="MMR_HSR1"/>
    <property type="match status" value="1"/>
</dbReference>
<dbReference type="PIRSF" id="PIRSF002401">
    <property type="entry name" value="GTP_bd_Obg/CgtA"/>
    <property type="match status" value="1"/>
</dbReference>
<dbReference type="PRINTS" id="PR00326">
    <property type="entry name" value="GTP1OBG"/>
</dbReference>
<dbReference type="SUPFAM" id="SSF102741">
    <property type="entry name" value="Obg GTP-binding protein C-terminal domain"/>
    <property type="match status" value="1"/>
</dbReference>
<dbReference type="SUPFAM" id="SSF82051">
    <property type="entry name" value="Obg GTP-binding protein N-terminal domain"/>
    <property type="match status" value="1"/>
</dbReference>
<dbReference type="SUPFAM" id="SSF52540">
    <property type="entry name" value="P-loop containing nucleoside triphosphate hydrolases"/>
    <property type="match status" value="1"/>
</dbReference>
<dbReference type="PROSITE" id="PS51710">
    <property type="entry name" value="G_OBG"/>
    <property type="match status" value="1"/>
</dbReference>
<dbReference type="PROSITE" id="PS00905">
    <property type="entry name" value="GTP1_OBG"/>
    <property type="match status" value="1"/>
</dbReference>
<dbReference type="PROSITE" id="PS51883">
    <property type="entry name" value="OBG"/>
    <property type="match status" value="1"/>
</dbReference>
<dbReference type="PROSITE" id="PS51881">
    <property type="entry name" value="OCT"/>
    <property type="match status" value="1"/>
</dbReference>
<sequence length="434" mass="47668">MPTFVDQTKIEVQAGKGGDGMVAFRHEKYVPNGGPAGGDGGRGGSIIFVADSGLRTLMDFRYRRKFKADSGENGRIKSQYGRAAKDLYLKVPVGTTVYDFNTGELIGDLVEKGQELVVAKGGRGGRGNIHFATSVNTAPEIAENGEPGEDRVLRLELKLLADVGLVGFPSVGKSTLLSVTTKAKPKIAAYEFTTLTPNLGMVILPDGRDFSMADLPGLIEGASQGVGLGIQFLRHVERTKVILHLVSMDPNNGREAIEDYHTIKNELKNYETDLSKKRELIVASQMDISGAEEKLAAFKKALKEEGNNEPVYEISSVTHKGVSKLMNDTATLVEEVEKERAEEEPKVVQKTKEYKYKAPQKNEFTVEKVGEHEFVVKGEQLERLVQMTNLDHQDGIMRLARRLKRLGVDDALREKGAVNGDDVAIGKFVFEFVQ</sequence>
<gene>
    <name evidence="1" type="primary">obg</name>
    <name type="ordered locus">lhv_1041</name>
</gene>
<accession>A8YV14</accession>
<protein>
    <recommendedName>
        <fullName evidence="1">GTPase Obg</fullName>
        <ecNumber evidence="1">3.6.5.-</ecNumber>
    </recommendedName>
    <alternativeName>
        <fullName evidence="1">GTP-binding protein Obg</fullName>
    </alternativeName>
</protein>
<evidence type="ECO:0000255" key="1">
    <source>
        <dbReference type="HAMAP-Rule" id="MF_01454"/>
    </source>
</evidence>
<evidence type="ECO:0000255" key="2">
    <source>
        <dbReference type="PROSITE-ProRule" id="PRU01229"/>
    </source>
</evidence>
<evidence type="ECO:0000255" key="3">
    <source>
        <dbReference type="PROSITE-ProRule" id="PRU01231"/>
    </source>
</evidence>
<proteinExistence type="inferred from homology"/>
<comment type="function">
    <text evidence="1">An essential GTPase which binds GTP, GDP and possibly (p)ppGpp with moderate affinity, with high nucleotide exchange rates and a fairly low GTP hydrolysis rate. Plays a role in control of the cell cycle, stress response, ribosome biogenesis and in those bacteria that undergo differentiation, in morphogenesis control.</text>
</comment>
<comment type="cofactor">
    <cofactor evidence="1">
        <name>Mg(2+)</name>
        <dbReference type="ChEBI" id="CHEBI:18420"/>
    </cofactor>
</comment>
<comment type="subunit">
    <text evidence="1">Monomer.</text>
</comment>
<comment type="subcellular location">
    <subcellularLocation>
        <location evidence="1">Cytoplasm</location>
    </subcellularLocation>
</comment>
<comment type="similarity">
    <text evidence="1">Belongs to the TRAFAC class OBG-HflX-like GTPase superfamily. OBG GTPase family.</text>
</comment>
<reference key="1">
    <citation type="journal article" date="2008" name="J. Bacteriol.">
        <title>Genome sequence of Lactobacillus helveticus: an organism distinguished by selective gene loss and IS element expansion.</title>
        <authorList>
            <person name="Callanan M."/>
            <person name="Kaleta P."/>
            <person name="O'Callaghan J."/>
            <person name="O'Sullivan O."/>
            <person name="Jordan K."/>
            <person name="McAuliffe O."/>
            <person name="Sangrador-Vegas A."/>
            <person name="Slattery L."/>
            <person name="Fitzgerald G.F."/>
            <person name="Beresford T."/>
            <person name="Ross R.P."/>
        </authorList>
    </citation>
    <scope>NUCLEOTIDE SEQUENCE [LARGE SCALE GENOMIC DNA]</scope>
    <source>
        <strain>DPC 4571</strain>
    </source>
</reference>